<protein>
    <recommendedName>
        <fullName evidence="1">Thymidine phosphorylase</fullName>
        <ecNumber evidence="1">2.4.2.4</ecNumber>
    </recommendedName>
    <alternativeName>
        <fullName evidence="1">TdRPase</fullName>
    </alternativeName>
</protein>
<reference key="1">
    <citation type="journal article" date="2011" name="Proc. Natl. Acad. Sci. U.S.A.">
        <title>Genomic anatomy of Escherichia coli O157:H7 outbreaks.</title>
        <authorList>
            <person name="Eppinger M."/>
            <person name="Mammel M.K."/>
            <person name="Leclerc J.E."/>
            <person name="Ravel J."/>
            <person name="Cebula T.A."/>
        </authorList>
    </citation>
    <scope>NUCLEOTIDE SEQUENCE [LARGE SCALE GENOMIC DNA]</scope>
    <source>
        <strain>EC4115 / EHEC</strain>
    </source>
</reference>
<gene>
    <name evidence="1" type="primary">deoA</name>
    <name type="ordered locus">ECH74115_5897</name>
</gene>
<keyword id="KW-0328">Glycosyltransferase</keyword>
<keyword id="KW-0808">Transferase</keyword>
<dbReference type="EC" id="2.4.2.4" evidence="1"/>
<dbReference type="EMBL" id="CP001164">
    <property type="protein sequence ID" value="ACI37535.1"/>
    <property type="molecule type" value="Genomic_DNA"/>
</dbReference>
<dbReference type="RefSeq" id="WP_000477811.1">
    <property type="nucleotide sequence ID" value="NC_011353.1"/>
</dbReference>
<dbReference type="SMR" id="B5Z4R4"/>
<dbReference type="GeneID" id="93777462"/>
<dbReference type="KEGG" id="ecf:ECH74115_5897"/>
<dbReference type="HOGENOM" id="CLU_025040_0_1_6"/>
<dbReference type="UniPathway" id="UPA00578">
    <property type="reaction ID" value="UER00638"/>
</dbReference>
<dbReference type="GO" id="GO:0005829">
    <property type="term" value="C:cytosol"/>
    <property type="evidence" value="ECO:0007669"/>
    <property type="project" value="TreeGrafter"/>
</dbReference>
<dbReference type="GO" id="GO:0004645">
    <property type="term" value="F:1,4-alpha-oligoglucan phosphorylase activity"/>
    <property type="evidence" value="ECO:0007669"/>
    <property type="project" value="InterPro"/>
</dbReference>
<dbReference type="GO" id="GO:0009032">
    <property type="term" value="F:thymidine phosphorylase activity"/>
    <property type="evidence" value="ECO:0007669"/>
    <property type="project" value="UniProtKB-UniRule"/>
</dbReference>
<dbReference type="GO" id="GO:0006206">
    <property type="term" value="P:pyrimidine nucleobase metabolic process"/>
    <property type="evidence" value="ECO:0007669"/>
    <property type="project" value="InterPro"/>
</dbReference>
<dbReference type="GO" id="GO:0046104">
    <property type="term" value="P:thymidine metabolic process"/>
    <property type="evidence" value="ECO:0007669"/>
    <property type="project" value="UniProtKB-UniRule"/>
</dbReference>
<dbReference type="FunFam" id="3.40.1030.10:FF:000001">
    <property type="entry name" value="Thymidine phosphorylase"/>
    <property type="match status" value="1"/>
</dbReference>
<dbReference type="FunFam" id="3.90.1170.30:FF:000001">
    <property type="entry name" value="Thymidine phosphorylase"/>
    <property type="match status" value="1"/>
</dbReference>
<dbReference type="Gene3D" id="3.40.1030.10">
    <property type="entry name" value="Nucleoside phosphorylase/phosphoribosyltransferase catalytic domain"/>
    <property type="match status" value="1"/>
</dbReference>
<dbReference type="Gene3D" id="3.90.1170.30">
    <property type="entry name" value="Pyrimidine nucleoside phosphorylase-like, C-terminal domain"/>
    <property type="match status" value="1"/>
</dbReference>
<dbReference type="Gene3D" id="1.20.970.10">
    <property type="entry name" value="Transferase, Pyrimidine Nucleoside Phosphorylase, Chain C"/>
    <property type="match status" value="1"/>
</dbReference>
<dbReference type="HAMAP" id="MF_01628">
    <property type="entry name" value="Thymid_phosp"/>
    <property type="match status" value="1"/>
</dbReference>
<dbReference type="InterPro" id="IPR000312">
    <property type="entry name" value="Glycosyl_Trfase_fam3"/>
</dbReference>
<dbReference type="InterPro" id="IPR017459">
    <property type="entry name" value="Glycosyl_Trfase_fam3_N_dom"/>
</dbReference>
<dbReference type="InterPro" id="IPR036320">
    <property type="entry name" value="Glycosyl_Trfase_fam3_N_dom_sf"/>
</dbReference>
<dbReference type="InterPro" id="IPR035902">
    <property type="entry name" value="Nuc_phospho_transferase"/>
</dbReference>
<dbReference type="InterPro" id="IPR036566">
    <property type="entry name" value="PYNP-like_C_sf"/>
</dbReference>
<dbReference type="InterPro" id="IPR013102">
    <property type="entry name" value="PYNP_C"/>
</dbReference>
<dbReference type="InterPro" id="IPR018090">
    <property type="entry name" value="Pyrmidine_PPas_bac/euk"/>
</dbReference>
<dbReference type="InterPro" id="IPR017872">
    <property type="entry name" value="Pyrmidine_PPase_CS"/>
</dbReference>
<dbReference type="InterPro" id="IPR000053">
    <property type="entry name" value="Thymidine/pyrmidine_PPase"/>
</dbReference>
<dbReference type="InterPro" id="IPR013465">
    <property type="entry name" value="Thymidine_Pase"/>
</dbReference>
<dbReference type="NCBIfam" id="NF004490">
    <property type="entry name" value="PRK05820.1"/>
    <property type="match status" value="1"/>
</dbReference>
<dbReference type="NCBIfam" id="TIGR02643">
    <property type="entry name" value="T_phosphoryl"/>
    <property type="match status" value="1"/>
</dbReference>
<dbReference type="NCBIfam" id="TIGR02644">
    <property type="entry name" value="Y_phosphoryl"/>
    <property type="match status" value="1"/>
</dbReference>
<dbReference type="PANTHER" id="PTHR10515">
    <property type="entry name" value="THYMIDINE PHOSPHORYLASE"/>
    <property type="match status" value="1"/>
</dbReference>
<dbReference type="PANTHER" id="PTHR10515:SF0">
    <property type="entry name" value="THYMIDINE PHOSPHORYLASE"/>
    <property type="match status" value="1"/>
</dbReference>
<dbReference type="Pfam" id="PF02885">
    <property type="entry name" value="Glycos_trans_3N"/>
    <property type="match status" value="1"/>
</dbReference>
<dbReference type="Pfam" id="PF00591">
    <property type="entry name" value="Glycos_transf_3"/>
    <property type="match status" value="1"/>
</dbReference>
<dbReference type="Pfam" id="PF07831">
    <property type="entry name" value="PYNP_C"/>
    <property type="match status" value="1"/>
</dbReference>
<dbReference type="PIRSF" id="PIRSF000478">
    <property type="entry name" value="TP_PyNP"/>
    <property type="match status" value="1"/>
</dbReference>
<dbReference type="SMART" id="SM00941">
    <property type="entry name" value="PYNP_C"/>
    <property type="match status" value="1"/>
</dbReference>
<dbReference type="SUPFAM" id="SSF52418">
    <property type="entry name" value="Nucleoside phosphorylase/phosphoribosyltransferase catalytic domain"/>
    <property type="match status" value="1"/>
</dbReference>
<dbReference type="SUPFAM" id="SSF47648">
    <property type="entry name" value="Nucleoside phosphorylase/phosphoribosyltransferase N-terminal domain"/>
    <property type="match status" value="1"/>
</dbReference>
<dbReference type="SUPFAM" id="SSF54680">
    <property type="entry name" value="Pyrimidine nucleoside phosphorylase C-terminal domain"/>
    <property type="match status" value="1"/>
</dbReference>
<dbReference type="PROSITE" id="PS00647">
    <property type="entry name" value="THYMID_PHOSPHORYLASE"/>
    <property type="match status" value="1"/>
</dbReference>
<comment type="function">
    <text evidence="1">The enzymes which catalyze the reversible phosphorolysis of pyrimidine nucleosides are involved in the degradation of these compounds and in their utilization as carbon and energy sources, or in the rescue of pyrimidine bases for nucleotide synthesis.</text>
</comment>
<comment type="catalytic activity">
    <reaction evidence="1">
        <text>thymidine + phosphate = 2-deoxy-alpha-D-ribose 1-phosphate + thymine</text>
        <dbReference type="Rhea" id="RHEA:16037"/>
        <dbReference type="ChEBI" id="CHEBI:17748"/>
        <dbReference type="ChEBI" id="CHEBI:17821"/>
        <dbReference type="ChEBI" id="CHEBI:43474"/>
        <dbReference type="ChEBI" id="CHEBI:57259"/>
        <dbReference type="EC" id="2.4.2.4"/>
    </reaction>
</comment>
<comment type="pathway">
    <text evidence="1">Pyrimidine metabolism; dTMP biosynthesis via salvage pathway; dTMP from thymine: step 1/2.</text>
</comment>
<comment type="subunit">
    <text evidence="1">Homodimer.</text>
</comment>
<comment type="similarity">
    <text evidence="1">Belongs to the thymidine/pyrimidine-nucleoside phosphorylase family.</text>
</comment>
<name>TYPH_ECO5E</name>
<sequence length="440" mass="47180">MFLAQEIIRKKRDGHALSDEEIRFFINGIRDNTISEGQIAALAMTIFFHDMTMPERVSLTMAMRDSGTVLDWKSLHLNGPIVDKHSTGGVGDVTSLMLGPMVAACGGYIPMISGRGLGHTGGTLDKLESIPGFDIFPDDNRFREIIKDVGVAIIGQTSSLAPADKRFYATRDITATVDSIPLITASILAKKLAEGLDALVMDVKVGSGAFMPTYELSEALAEAIVGVANGAGVRTTALLTDMNQVLASSAGNAVEVREAVQFLTGEYRNPRLFDVTMALCVEMLISGKLAKDDAEARAKLQAVLDNGKAAEVFGRMVAAQKGPTDFVENYAKYLPTAMLTKAVYADTEGFVSEMDTRALGMAVVAMGGGRRQASDTIDYSVGFTDMARLGDQVDGQRPLAVIHAKDENSWQEAAKAVKAAIKLADKAPESTPTVYRRISE</sequence>
<evidence type="ECO:0000255" key="1">
    <source>
        <dbReference type="HAMAP-Rule" id="MF_01628"/>
    </source>
</evidence>
<proteinExistence type="inferred from homology"/>
<accession>B5Z4R4</accession>
<feature type="chain" id="PRO_1000186252" description="Thymidine phosphorylase">
    <location>
        <begin position="1"/>
        <end position="440"/>
    </location>
</feature>
<organism>
    <name type="scientific">Escherichia coli O157:H7 (strain EC4115 / EHEC)</name>
    <dbReference type="NCBI Taxonomy" id="444450"/>
    <lineage>
        <taxon>Bacteria</taxon>
        <taxon>Pseudomonadati</taxon>
        <taxon>Pseudomonadota</taxon>
        <taxon>Gammaproteobacteria</taxon>
        <taxon>Enterobacterales</taxon>
        <taxon>Enterobacteriaceae</taxon>
        <taxon>Escherichia</taxon>
    </lineage>
</organism>